<name>PA2HK_TRIST</name>
<organism>
    <name type="scientific">Trimeresurus stejnegeri</name>
    <name type="common">Chinese green tree viper</name>
    <name type="synonym">Viridovipera stejnegeri</name>
    <dbReference type="NCBI Taxonomy" id="39682"/>
    <lineage>
        <taxon>Eukaryota</taxon>
        <taxon>Metazoa</taxon>
        <taxon>Chordata</taxon>
        <taxon>Craniata</taxon>
        <taxon>Vertebrata</taxon>
        <taxon>Euteleostomi</taxon>
        <taxon>Lepidosauria</taxon>
        <taxon>Squamata</taxon>
        <taxon>Bifurcata</taxon>
        <taxon>Unidentata</taxon>
        <taxon>Episquamata</taxon>
        <taxon>Toxicofera</taxon>
        <taxon>Serpentes</taxon>
        <taxon>Colubroidea</taxon>
        <taxon>Viperidae</taxon>
        <taxon>Crotalinae</taxon>
        <taxon>Trimeresurus</taxon>
    </lineage>
</organism>
<proteinExistence type="evidence at protein level"/>
<accession>P0DJQ2</accession>
<comment type="function">
    <text evidence="1 2">Snake venom phospholipase A2 homolog that lacks catalytic activity (By similarity). Shows myotoxic activities (By similarity). Induces local edema a few hours after injection (5-10 ug) in the hind paw (PubMed:12959640).</text>
</comment>
<comment type="subcellular location">
    <subcellularLocation>
        <location evidence="2">Secreted</location>
    </subcellularLocation>
</comment>
<comment type="tissue specificity">
    <text evidence="5">Expressed by the venom gland.</text>
</comment>
<comment type="developmental stage">
    <text evidence="2">Is expressed more abundantly in adult than in juvenile vipers.</text>
</comment>
<comment type="PTM">
    <text evidence="1">Contains 7 disulfide bonds.</text>
</comment>
<comment type="mass spectrometry"/>
<comment type="similarity">
    <text evidence="4">Belongs to the phospholipase A2 family. Group II subfamily.</text>
</comment>
<keyword id="KW-0903">Direct protein sequencing</keyword>
<keyword id="KW-1015">Disulfide bond</keyword>
<keyword id="KW-0959">Myotoxin</keyword>
<keyword id="KW-0964">Secreted</keyword>
<keyword id="KW-0800">Toxin</keyword>
<dbReference type="GO" id="GO:0005576">
    <property type="term" value="C:extracellular region"/>
    <property type="evidence" value="ECO:0007669"/>
    <property type="project" value="UniProtKB-SubCell"/>
</dbReference>
<dbReference type="GO" id="GO:0090729">
    <property type="term" value="F:toxin activity"/>
    <property type="evidence" value="ECO:0007669"/>
    <property type="project" value="UniProtKB-KW"/>
</dbReference>
<protein>
    <recommendedName>
        <fullName evidence="3">Basic phospholipase A2 homolog CTs-K49c</fullName>
        <shortName>svPLA2 homolog</shortName>
    </recommendedName>
</protein>
<sequence>SVIELGKMILQETGKNPVTHYGA</sequence>
<reference key="1">
    <citation type="journal article" date="2004" name="Biochem. J.">
        <title>Venom phospholipases A2 of bamboo viper (Trimeresurus stejnegeri): molecular characterization, geographic variations and evidence of multiple ancestries.</title>
        <authorList>
            <person name="Tsai I.-H."/>
            <person name="Wang Y.-M."/>
            <person name="Chen Y.-H."/>
            <person name="Tsai T.-S."/>
            <person name="Tu M.-C."/>
        </authorList>
    </citation>
    <scope>PROTEIN SEQUENCE</scope>
    <scope>FUNCTION</scope>
    <scope>DEVELOPMENTAL STAGE</scope>
    <scope>MASS SPECTROMETRY</scope>
    <scope>SUBCELLULAR LOCATION</scope>
    <source>
        <strain>Chinese</strain>
        <tissue>Venom</tissue>
    </source>
</reference>
<evidence type="ECO:0000250" key="1">
    <source>
        <dbReference type="UniProtKB" id="Q6H3D1"/>
    </source>
</evidence>
<evidence type="ECO:0000269" key="2">
    <source>
    </source>
</evidence>
<evidence type="ECO:0000303" key="3">
    <source>
    </source>
</evidence>
<evidence type="ECO:0000305" key="4"/>
<evidence type="ECO:0000305" key="5">
    <source>
    </source>
</evidence>
<feature type="chain" id="PRO_0000419084" description="Basic phospholipase A2 homolog CTs-K49c">
    <location>
        <begin position="1"/>
        <end position="23" status="greater than"/>
    </location>
</feature>
<feature type="non-terminal residue">
    <location>
        <position position="23"/>
    </location>
</feature>